<sequence>MKKELLEWIISIAVAFVILFIVGKFIVTPYTIKGESMDPTLKDGERVAVNIIGYKTGGLEKGNVVVFHANKNDDYVKRVIGVPGDKVEYKNDTLYVNGKKQDEPYLNYNLKHKQGDYITGTFQVKDLPNANPKSNVIPKGKYLVLGDNREVSKDSRAFGLIDEDQIVGKVSFRFWPFSEFKYNFNPENTKN</sequence>
<reference key="1">
    <citation type="journal article" date="2004" name="Proc. Natl. Acad. Sci. U.S.A.">
        <title>Complete genomes of two clinical Staphylococcus aureus strains: evidence for the rapid evolution of virulence and drug resistance.</title>
        <authorList>
            <person name="Holden M.T.G."/>
            <person name="Feil E.J."/>
            <person name="Lindsay J.A."/>
            <person name="Peacock S.J."/>
            <person name="Day N.P.J."/>
            <person name="Enright M.C."/>
            <person name="Foster T.J."/>
            <person name="Moore C.E."/>
            <person name="Hurst L."/>
            <person name="Atkin R."/>
            <person name="Barron A."/>
            <person name="Bason N."/>
            <person name="Bentley S.D."/>
            <person name="Chillingworth C."/>
            <person name="Chillingworth T."/>
            <person name="Churcher C."/>
            <person name="Clark L."/>
            <person name="Corton C."/>
            <person name="Cronin A."/>
            <person name="Doggett J."/>
            <person name="Dowd L."/>
            <person name="Feltwell T."/>
            <person name="Hance Z."/>
            <person name="Harris B."/>
            <person name="Hauser H."/>
            <person name="Holroyd S."/>
            <person name="Jagels K."/>
            <person name="James K.D."/>
            <person name="Lennard N."/>
            <person name="Line A."/>
            <person name="Mayes R."/>
            <person name="Moule S."/>
            <person name="Mungall K."/>
            <person name="Ormond D."/>
            <person name="Quail M.A."/>
            <person name="Rabbinowitsch E."/>
            <person name="Rutherford K.M."/>
            <person name="Sanders M."/>
            <person name="Sharp S."/>
            <person name="Simmonds M."/>
            <person name="Stevens K."/>
            <person name="Whitehead S."/>
            <person name="Barrell B.G."/>
            <person name="Spratt B.G."/>
            <person name="Parkhill J."/>
        </authorList>
    </citation>
    <scope>NUCLEOTIDE SEQUENCE [LARGE SCALE GENOMIC DNA]</scope>
    <source>
        <strain>MRSA252</strain>
    </source>
</reference>
<accession>Q6GIC3</accession>
<comment type="function">
    <text evidence="1">Essential for cell viability.</text>
</comment>
<comment type="catalytic activity">
    <reaction>
        <text>Cleavage of hydrophobic, N-terminal signal or leader sequences from secreted and periplasmic proteins.</text>
        <dbReference type="EC" id="3.4.21.89"/>
    </reaction>
</comment>
<comment type="subcellular location">
    <subcellularLocation>
        <location evidence="3">Cell membrane</location>
        <topology evidence="3">Single-pass type II membrane protein</topology>
    </subcellularLocation>
</comment>
<comment type="similarity">
    <text evidence="3">Belongs to the peptidase S26 family.</text>
</comment>
<organism>
    <name type="scientific">Staphylococcus aureus (strain MRSA252)</name>
    <dbReference type="NCBI Taxonomy" id="282458"/>
    <lineage>
        <taxon>Bacteria</taxon>
        <taxon>Bacillati</taxon>
        <taxon>Bacillota</taxon>
        <taxon>Bacilli</taxon>
        <taxon>Bacillales</taxon>
        <taxon>Staphylococcaceae</taxon>
        <taxon>Staphylococcus</taxon>
    </lineage>
</organism>
<protein>
    <recommendedName>
        <fullName>Signal peptidase IB</fullName>
        <shortName>SPase IB</shortName>
        <ecNumber>3.4.21.89</ecNumber>
    </recommendedName>
    <alternativeName>
        <fullName>Leader peptidase IB</fullName>
    </alternativeName>
</protein>
<keyword id="KW-1003">Cell membrane</keyword>
<keyword id="KW-0378">Hydrolase</keyword>
<keyword id="KW-0472">Membrane</keyword>
<keyword id="KW-0645">Protease</keyword>
<keyword id="KW-0812">Transmembrane</keyword>
<keyword id="KW-1133">Transmembrane helix</keyword>
<gene>
    <name type="primary">spsB</name>
    <name type="ordered locus">SAR0927</name>
</gene>
<feature type="chain" id="PRO_0000109529" description="Signal peptidase IB">
    <location>
        <begin position="1"/>
        <end position="191"/>
    </location>
</feature>
<feature type="topological domain" description="Cytoplasmic" evidence="2">
    <location>
        <begin position="1"/>
        <end position="7"/>
    </location>
</feature>
<feature type="transmembrane region" description="Helical" evidence="2">
    <location>
        <begin position="8"/>
        <end position="28"/>
    </location>
</feature>
<feature type="topological domain" description="Extracellular" evidence="2">
    <location>
        <begin position="29"/>
        <end position="191"/>
    </location>
</feature>
<feature type="active site" evidence="1">
    <location>
        <position position="36"/>
    </location>
</feature>
<feature type="active site" evidence="1">
    <location>
        <position position="77"/>
    </location>
</feature>
<dbReference type="EC" id="3.4.21.89"/>
<dbReference type="EMBL" id="BX571856">
    <property type="protein sequence ID" value="CAG39933.1"/>
    <property type="molecule type" value="Genomic_DNA"/>
</dbReference>
<dbReference type="SMR" id="Q6GIC3"/>
<dbReference type="MEROPS" id="S26.016"/>
<dbReference type="KEGG" id="sar:SAR0927"/>
<dbReference type="HOGENOM" id="CLU_028723_5_0_9"/>
<dbReference type="Proteomes" id="UP000000596">
    <property type="component" value="Chromosome"/>
</dbReference>
<dbReference type="GO" id="GO:0005886">
    <property type="term" value="C:plasma membrane"/>
    <property type="evidence" value="ECO:0007669"/>
    <property type="project" value="UniProtKB-SubCell"/>
</dbReference>
<dbReference type="GO" id="GO:0004252">
    <property type="term" value="F:serine-type endopeptidase activity"/>
    <property type="evidence" value="ECO:0007669"/>
    <property type="project" value="UniProtKB-EC"/>
</dbReference>
<dbReference type="GO" id="GO:0006465">
    <property type="term" value="P:signal peptide processing"/>
    <property type="evidence" value="ECO:0007669"/>
    <property type="project" value="InterPro"/>
</dbReference>
<dbReference type="CDD" id="cd06530">
    <property type="entry name" value="S26_SPase_I"/>
    <property type="match status" value="1"/>
</dbReference>
<dbReference type="FunFam" id="2.10.109.10:FF:000008">
    <property type="entry name" value="Signal peptidase I"/>
    <property type="match status" value="1"/>
</dbReference>
<dbReference type="Gene3D" id="2.10.109.10">
    <property type="entry name" value="Umud Fragment, subunit A"/>
    <property type="match status" value="1"/>
</dbReference>
<dbReference type="InterPro" id="IPR036286">
    <property type="entry name" value="LexA/Signal_pep-like_sf"/>
</dbReference>
<dbReference type="InterPro" id="IPR000223">
    <property type="entry name" value="Pept_S26A_signal_pept_1"/>
</dbReference>
<dbReference type="InterPro" id="IPR019758">
    <property type="entry name" value="Pept_S26A_signal_pept_1_CS"/>
</dbReference>
<dbReference type="InterPro" id="IPR019757">
    <property type="entry name" value="Pept_S26A_signal_pept_1_Lys-AS"/>
</dbReference>
<dbReference type="InterPro" id="IPR019756">
    <property type="entry name" value="Pept_S26A_signal_pept_1_Ser-AS"/>
</dbReference>
<dbReference type="InterPro" id="IPR019533">
    <property type="entry name" value="Peptidase_S26"/>
</dbReference>
<dbReference type="NCBIfam" id="TIGR02227">
    <property type="entry name" value="sigpep_I_bact"/>
    <property type="match status" value="1"/>
</dbReference>
<dbReference type="PANTHER" id="PTHR43390:SF1">
    <property type="entry name" value="CHLOROPLAST PROCESSING PEPTIDASE"/>
    <property type="match status" value="1"/>
</dbReference>
<dbReference type="PANTHER" id="PTHR43390">
    <property type="entry name" value="SIGNAL PEPTIDASE I"/>
    <property type="match status" value="1"/>
</dbReference>
<dbReference type="Pfam" id="PF10502">
    <property type="entry name" value="Peptidase_S26"/>
    <property type="match status" value="1"/>
</dbReference>
<dbReference type="PRINTS" id="PR00727">
    <property type="entry name" value="LEADERPTASE"/>
</dbReference>
<dbReference type="SUPFAM" id="SSF51306">
    <property type="entry name" value="LexA/Signal peptidase"/>
    <property type="match status" value="1"/>
</dbReference>
<dbReference type="PROSITE" id="PS00501">
    <property type="entry name" value="SPASE_I_1"/>
    <property type="match status" value="1"/>
</dbReference>
<dbReference type="PROSITE" id="PS00760">
    <property type="entry name" value="SPASE_I_2"/>
    <property type="match status" value="1"/>
</dbReference>
<dbReference type="PROSITE" id="PS00761">
    <property type="entry name" value="SPASE_I_3"/>
    <property type="match status" value="1"/>
</dbReference>
<name>LEP_STAAR</name>
<evidence type="ECO:0000250" key="1"/>
<evidence type="ECO:0000255" key="2"/>
<evidence type="ECO:0000305" key="3"/>
<proteinExistence type="inferred from homology"/>